<keyword id="KW-0963">Cytoplasm</keyword>
<keyword id="KW-0489">Methyltransferase</keyword>
<keyword id="KW-1185">Reference proteome</keyword>
<keyword id="KW-0694">RNA-binding</keyword>
<keyword id="KW-0698">rRNA processing</keyword>
<keyword id="KW-0949">S-adenosyl-L-methionine</keyword>
<keyword id="KW-0808">Transferase</keyword>
<name>RSMA_PROM4</name>
<sequence>MSFSGHSARKRFGQHWLKDVAILEKIVEAAELCENDRVLEIGPGRGALTHKLLNSKVSLVHAIELDTDLVVGLRERFFHETRFSLKGGDALKISLLPPDGIEVNKVVANIPYNITSPLLERLIGKLGFFPETRYERLVLLLQKEVADRILAMPGQSSFSAMSVRVQLLCKSRSVCDVSPKCFKPSPKVHSKVVVIEPFAFSERLNVDIEKRVESLLRTAFLGRRKKLRNTLASIRPLNQLESLADQLGISLNQRPQEISPMMWVSLAKRIHDMDKLVGEIQS</sequence>
<gene>
    <name evidence="1" type="primary">rsmA</name>
    <name evidence="1" type="synonym">ksgA</name>
    <name type="ordered locus">P9211_07111</name>
</gene>
<comment type="function">
    <text evidence="1">Specifically dimethylates two adjacent adenosines (A1518 and A1519) in the loop of a conserved hairpin near the 3'-end of 16S rRNA in the 30S particle. May play a critical role in biogenesis of 30S subunits.</text>
</comment>
<comment type="catalytic activity">
    <reaction evidence="1">
        <text>adenosine(1518)/adenosine(1519) in 16S rRNA + 4 S-adenosyl-L-methionine = N(6)-dimethyladenosine(1518)/N(6)-dimethyladenosine(1519) in 16S rRNA + 4 S-adenosyl-L-homocysteine + 4 H(+)</text>
        <dbReference type="Rhea" id="RHEA:19609"/>
        <dbReference type="Rhea" id="RHEA-COMP:10232"/>
        <dbReference type="Rhea" id="RHEA-COMP:10233"/>
        <dbReference type="ChEBI" id="CHEBI:15378"/>
        <dbReference type="ChEBI" id="CHEBI:57856"/>
        <dbReference type="ChEBI" id="CHEBI:59789"/>
        <dbReference type="ChEBI" id="CHEBI:74411"/>
        <dbReference type="ChEBI" id="CHEBI:74493"/>
        <dbReference type="EC" id="2.1.1.182"/>
    </reaction>
</comment>
<comment type="subcellular location">
    <subcellularLocation>
        <location evidence="1">Cytoplasm</location>
    </subcellularLocation>
</comment>
<comment type="similarity">
    <text evidence="1">Belongs to the class I-like SAM-binding methyltransferase superfamily. rRNA adenine N(6)-methyltransferase family. RsmA subfamily.</text>
</comment>
<dbReference type="EC" id="2.1.1.182" evidence="1"/>
<dbReference type="EMBL" id="CP000878">
    <property type="protein sequence ID" value="ABX08642.1"/>
    <property type="molecule type" value="Genomic_DNA"/>
</dbReference>
<dbReference type="RefSeq" id="WP_012195264.1">
    <property type="nucleotide sequence ID" value="NC_009976.1"/>
</dbReference>
<dbReference type="SMR" id="A9B9Y0"/>
<dbReference type="STRING" id="93059.P9211_07111"/>
<dbReference type="KEGG" id="pmj:P9211_07111"/>
<dbReference type="eggNOG" id="COG0030">
    <property type="taxonomic scope" value="Bacteria"/>
</dbReference>
<dbReference type="HOGENOM" id="CLU_041220_0_1_3"/>
<dbReference type="OrthoDB" id="9814755at2"/>
<dbReference type="Proteomes" id="UP000000788">
    <property type="component" value="Chromosome"/>
</dbReference>
<dbReference type="GO" id="GO:0005829">
    <property type="term" value="C:cytosol"/>
    <property type="evidence" value="ECO:0007669"/>
    <property type="project" value="TreeGrafter"/>
</dbReference>
<dbReference type="GO" id="GO:0052908">
    <property type="term" value="F:16S rRNA (adenine(1518)-N(6)/adenine(1519)-N(6))-dimethyltransferase activity"/>
    <property type="evidence" value="ECO:0007669"/>
    <property type="project" value="UniProtKB-EC"/>
</dbReference>
<dbReference type="GO" id="GO:0003723">
    <property type="term" value="F:RNA binding"/>
    <property type="evidence" value="ECO:0007669"/>
    <property type="project" value="UniProtKB-KW"/>
</dbReference>
<dbReference type="CDD" id="cd02440">
    <property type="entry name" value="AdoMet_MTases"/>
    <property type="match status" value="1"/>
</dbReference>
<dbReference type="Gene3D" id="1.10.8.100">
    <property type="entry name" value="Ribosomal RNA adenine dimethylase-like, domain 2"/>
    <property type="match status" value="1"/>
</dbReference>
<dbReference type="Gene3D" id="3.40.50.150">
    <property type="entry name" value="Vaccinia Virus protein VP39"/>
    <property type="match status" value="1"/>
</dbReference>
<dbReference type="HAMAP" id="MF_00607">
    <property type="entry name" value="16SrRNA_methyltr_A"/>
    <property type="match status" value="1"/>
</dbReference>
<dbReference type="InterPro" id="IPR001737">
    <property type="entry name" value="KsgA/Erm"/>
</dbReference>
<dbReference type="InterPro" id="IPR023165">
    <property type="entry name" value="rRNA_Ade_diMease-like_C"/>
</dbReference>
<dbReference type="InterPro" id="IPR020596">
    <property type="entry name" value="rRNA_Ade_Mease_Trfase_CS"/>
</dbReference>
<dbReference type="InterPro" id="IPR020598">
    <property type="entry name" value="rRNA_Ade_methylase_Trfase_N"/>
</dbReference>
<dbReference type="InterPro" id="IPR011530">
    <property type="entry name" value="rRNA_adenine_dimethylase"/>
</dbReference>
<dbReference type="InterPro" id="IPR029063">
    <property type="entry name" value="SAM-dependent_MTases_sf"/>
</dbReference>
<dbReference type="NCBIfam" id="TIGR00755">
    <property type="entry name" value="ksgA"/>
    <property type="match status" value="1"/>
</dbReference>
<dbReference type="PANTHER" id="PTHR11727">
    <property type="entry name" value="DIMETHYLADENOSINE TRANSFERASE"/>
    <property type="match status" value="1"/>
</dbReference>
<dbReference type="PANTHER" id="PTHR11727:SF7">
    <property type="entry name" value="DIMETHYLADENOSINE TRANSFERASE-RELATED"/>
    <property type="match status" value="1"/>
</dbReference>
<dbReference type="Pfam" id="PF00398">
    <property type="entry name" value="RrnaAD"/>
    <property type="match status" value="1"/>
</dbReference>
<dbReference type="SMART" id="SM00650">
    <property type="entry name" value="rADc"/>
    <property type="match status" value="1"/>
</dbReference>
<dbReference type="SUPFAM" id="SSF53335">
    <property type="entry name" value="S-adenosyl-L-methionine-dependent methyltransferases"/>
    <property type="match status" value="1"/>
</dbReference>
<dbReference type="PROSITE" id="PS01131">
    <property type="entry name" value="RRNA_A_DIMETH"/>
    <property type="match status" value="1"/>
</dbReference>
<dbReference type="PROSITE" id="PS51689">
    <property type="entry name" value="SAM_RNA_A_N6_MT"/>
    <property type="match status" value="1"/>
</dbReference>
<proteinExistence type="inferred from homology"/>
<accession>A9B9Y0</accession>
<reference key="1">
    <citation type="journal article" date="2007" name="PLoS Genet.">
        <title>Patterns and implications of gene gain and loss in the evolution of Prochlorococcus.</title>
        <authorList>
            <person name="Kettler G.C."/>
            <person name="Martiny A.C."/>
            <person name="Huang K."/>
            <person name="Zucker J."/>
            <person name="Coleman M.L."/>
            <person name="Rodrigue S."/>
            <person name="Chen F."/>
            <person name="Lapidus A."/>
            <person name="Ferriera S."/>
            <person name="Johnson J."/>
            <person name="Steglich C."/>
            <person name="Church G.M."/>
            <person name="Richardson P."/>
            <person name="Chisholm S.W."/>
        </authorList>
    </citation>
    <scope>NUCLEOTIDE SEQUENCE [LARGE SCALE GENOMIC DNA]</scope>
    <source>
        <strain>MIT 9211</strain>
    </source>
</reference>
<evidence type="ECO:0000255" key="1">
    <source>
        <dbReference type="HAMAP-Rule" id="MF_00607"/>
    </source>
</evidence>
<organism>
    <name type="scientific">Prochlorococcus marinus (strain MIT 9211)</name>
    <dbReference type="NCBI Taxonomy" id="93059"/>
    <lineage>
        <taxon>Bacteria</taxon>
        <taxon>Bacillati</taxon>
        <taxon>Cyanobacteriota</taxon>
        <taxon>Cyanophyceae</taxon>
        <taxon>Synechococcales</taxon>
        <taxon>Prochlorococcaceae</taxon>
        <taxon>Prochlorococcus</taxon>
    </lineage>
</organism>
<protein>
    <recommendedName>
        <fullName evidence="1">Ribosomal RNA small subunit methyltransferase A</fullName>
        <ecNumber evidence="1">2.1.1.182</ecNumber>
    </recommendedName>
    <alternativeName>
        <fullName evidence="1">16S rRNA (adenine(1518)-N(6)/adenine(1519)-N(6))-dimethyltransferase</fullName>
    </alternativeName>
    <alternativeName>
        <fullName evidence="1">16S rRNA dimethyladenosine transferase</fullName>
    </alternativeName>
    <alternativeName>
        <fullName evidence="1">16S rRNA dimethylase</fullName>
    </alternativeName>
    <alternativeName>
        <fullName evidence="1">S-adenosylmethionine-6-N', N'-adenosyl(rRNA) dimethyltransferase</fullName>
    </alternativeName>
</protein>
<feature type="chain" id="PRO_1000130307" description="Ribosomal RNA small subunit methyltransferase A">
    <location>
        <begin position="1"/>
        <end position="282"/>
    </location>
</feature>
<feature type="binding site" evidence="1">
    <location>
        <position position="15"/>
    </location>
    <ligand>
        <name>S-adenosyl-L-methionine</name>
        <dbReference type="ChEBI" id="CHEBI:59789"/>
    </ligand>
</feature>
<feature type="binding site" evidence="1">
    <location>
        <position position="17"/>
    </location>
    <ligand>
        <name>S-adenosyl-L-methionine</name>
        <dbReference type="ChEBI" id="CHEBI:59789"/>
    </ligand>
</feature>
<feature type="binding site" evidence="1">
    <location>
        <position position="42"/>
    </location>
    <ligand>
        <name>S-adenosyl-L-methionine</name>
        <dbReference type="ChEBI" id="CHEBI:59789"/>
    </ligand>
</feature>
<feature type="binding site" evidence="1">
    <location>
        <position position="64"/>
    </location>
    <ligand>
        <name>S-adenosyl-L-methionine</name>
        <dbReference type="ChEBI" id="CHEBI:59789"/>
    </ligand>
</feature>
<feature type="binding site" evidence="1">
    <location>
        <position position="89"/>
    </location>
    <ligand>
        <name>S-adenosyl-L-methionine</name>
        <dbReference type="ChEBI" id="CHEBI:59789"/>
    </ligand>
</feature>
<feature type="binding site" evidence="1">
    <location>
        <position position="109"/>
    </location>
    <ligand>
        <name>S-adenosyl-L-methionine</name>
        <dbReference type="ChEBI" id="CHEBI:59789"/>
    </ligand>
</feature>